<keyword id="KW-0687">Ribonucleoprotein</keyword>
<keyword id="KW-0689">Ribosomal protein</keyword>
<keyword id="KW-0694">RNA-binding</keyword>
<keyword id="KW-0699">rRNA-binding</keyword>
<evidence type="ECO:0000255" key="1">
    <source>
        <dbReference type="HAMAP-Rule" id="MF_00537"/>
    </source>
</evidence>
<evidence type="ECO:0000305" key="2"/>
<name>RS14_STRA3</name>
<protein>
    <recommendedName>
        <fullName evidence="1">Small ribosomal subunit protein uS14A</fullName>
    </recommendedName>
    <alternativeName>
        <fullName evidence="2">30S ribosomal protein S14</fullName>
    </alternativeName>
</protein>
<accession>Q8E3G1</accession>
<proteinExistence type="inferred from homology"/>
<comment type="function">
    <text evidence="1">Binds 16S rRNA, required for the assembly of 30S particles and may also be responsible for determining the conformation of the 16S rRNA at the A site.</text>
</comment>
<comment type="subunit">
    <text evidence="1">Part of the 30S ribosomal subunit. Contacts proteins S3 and S10.</text>
</comment>
<comment type="similarity">
    <text evidence="1">Belongs to the universal ribosomal protein uS14 family.</text>
</comment>
<dbReference type="EMBL" id="AL766853">
    <property type="protein sequence ID" value="CAD47457.1"/>
    <property type="molecule type" value="Genomic_DNA"/>
</dbReference>
<dbReference type="RefSeq" id="WP_001085659.1">
    <property type="nucleotide sequence ID" value="NC_004368.1"/>
</dbReference>
<dbReference type="SMR" id="Q8E3G1"/>
<dbReference type="GeneID" id="66886593"/>
<dbReference type="KEGG" id="san:gbs1798"/>
<dbReference type="eggNOG" id="COG0199">
    <property type="taxonomic scope" value="Bacteria"/>
</dbReference>
<dbReference type="HOGENOM" id="CLU_139869_0_0_9"/>
<dbReference type="Proteomes" id="UP000000823">
    <property type="component" value="Chromosome"/>
</dbReference>
<dbReference type="GO" id="GO:0005737">
    <property type="term" value="C:cytoplasm"/>
    <property type="evidence" value="ECO:0007669"/>
    <property type="project" value="UniProtKB-ARBA"/>
</dbReference>
<dbReference type="GO" id="GO:0015935">
    <property type="term" value="C:small ribosomal subunit"/>
    <property type="evidence" value="ECO:0007669"/>
    <property type="project" value="TreeGrafter"/>
</dbReference>
<dbReference type="GO" id="GO:0019843">
    <property type="term" value="F:rRNA binding"/>
    <property type="evidence" value="ECO:0007669"/>
    <property type="project" value="UniProtKB-UniRule"/>
</dbReference>
<dbReference type="GO" id="GO:0003735">
    <property type="term" value="F:structural constituent of ribosome"/>
    <property type="evidence" value="ECO:0007669"/>
    <property type="project" value="InterPro"/>
</dbReference>
<dbReference type="GO" id="GO:0006412">
    <property type="term" value="P:translation"/>
    <property type="evidence" value="ECO:0007669"/>
    <property type="project" value="UniProtKB-UniRule"/>
</dbReference>
<dbReference type="Gene3D" id="4.10.830.10">
    <property type="entry name" value="30s Ribosomal Protein S14, Chain N"/>
    <property type="match status" value="1"/>
</dbReference>
<dbReference type="HAMAP" id="MF_00537">
    <property type="entry name" value="Ribosomal_uS14_1"/>
    <property type="match status" value="1"/>
</dbReference>
<dbReference type="InterPro" id="IPR001209">
    <property type="entry name" value="Ribosomal_uS14"/>
</dbReference>
<dbReference type="InterPro" id="IPR023036">
    <property type="entry name" value="Ribosomal_uS14_bac/plastid"/>
</dbReference>
<dbReference type="InterPro" id="IPR043140">
    <property type="entry name" value="Ribosomal_uS14_sf"/>
</dbReference>
<dbReference type="NCBIfam" id="NF006477">
    <property type="entry name" value="PRK08881.1"/>
    <property type="match status" value="1"/>
</dbReference>
<dbReference type="PANTHER" id="PTHR19836">
    <property type="entry name" value="30S RIBOSOMAL PROTEIN S14"/>
    <property type="match status" value="1"/>
</dbReference>
<dbReference type="PANTHER" id="PTHR19836:SF19">
    <property type="entry name" value="SMALL RIBOSOMAL SUBUNIT PROTEIN US14M"/>
    <property type="match status" value="1"/>
</dbReference>
<dbReference type="Pfam" id="PF00253">
    <property type="entry name" value="Ribosomal_S14"/>
    <property type="match status" value="1"/>
</dbReference>
<dbReference type="SUPFAM" id="SSF57716">
    <property type="entry name" value="Glucocorticoid receptor-like (DNA-binding domain)"/>
    <property type="match status" value="1"/>
</dbReference>
<reference key="1">
    <citation type="journal article" date="2002" name="Mol. Microbiol.">
        <title>Genome sequence of Streptococcus agalactiae, a pathogen causing invasive neonatal disease.</title>
        <authorList>
            <person name="Glaser P."/>
            <person name="Rusniok C."/>
            <person name="Buchrieser C."/>
            <person name="Chevalier F."/>
            <person name="Frangeul L."/>
            <person name="Msadek T."/>
            <person name="Zouine M."/>
            <person name="Couve E."/>
            <person name="Lalioui L."/>
            <person name="Poyart C."/>
            <person name="Trieu-Cuot P."/>
            <person name="Kunst F."/>
        </authorList>
    </citation>
    <scope>NUCLEOTIDE SEQUENCE [LARGE SCALE GENOMIC DNA]</scope>
    <source>
        <strain>NEM316</strain>
    </source>
</reference>
<feature type="chain" id="PRO_0000269068" description="Small ribosomal subunit protein uS14A">
    <location>
        <begin position="1"/>
        <end position="89"/>
    </location>
</feature>
<organism>
    <name type="scientific">Streptococcus agalactiae serotype III (strain NEM316)</name>
    <dbReference type="NCBI Taxonomy" id="211110"/>
    <lineage>
        <taxon>Bacteria</taxon>
        <taxon>Bacillati</taxon>
        <taxon>Bacillota</taxon>
        <taxon>Bacilli</taxon>
        <taxon>Lactobacillales</taxon>
        <taxon>Streptococcaceae</taxon>
        <taxon>Streptococcus</taxon>
    </lineage>
</organism>
<gene>
    <name evidence="1" type="primary">rpsN</name>
    <name type="synonym">rpsN2</name>
    <name type="ordered locus">gbs1798</name>
</gene>
<sequence>MAKKSKIAKFQKQQKLVEQYAELRRELKEKGDYEALRKLPKDSNPNRLKNRDLIDGRPHAYMRKFGMSRINFRNLAYKGQIPGIKKASW</sequence>